<accession>C3MW09</accession>
<keyword id="KW-1003">Cell membrane</keyword>
<keyword id="KW-0350">Heme biosynthesis</keyword>
<keyword id="KW-0472">Membrane</keyword>
<keyword id="KW-0808">Transferase</keyword>
<keyword id="KW-0812">Transmembrane</keyword>
<keyword id="KW-1133">Transmembrane helix</keyword>
<comment type="function">
    <text evidence="1">Converts heme B (protoheme IX) to heme O by substitution of the vinyl group on carbon 2 of heme B porphyrin ring with a hydroxyethyl farnesyl side group.</text>
</comment>
<comment type="catalytic activity">
    <reaction evidence="1">
        <text>heme b + (2E,6E)-farnesyl diphosphate + H2O = Fe(II)-heme o + diphosphate</text>
        <dbReference type="Rhea" id="RHEA:28070"/>
        <dbReference type="ChEBI" id="CHEBI:15377"/>
        <dbReference type="ChEBI" id="CHEBI:33019"/>
        <dbReference type="ChEBI" id="CHEBI:60344"/>
        <dbReference type="ChEBI" id="CHEBI:60530"/>
        <dbReference type="ChEBI" id="CHEBI:175763"/>
        <dbReference type="EC" id="2.5.1.141"/>
    </reaction>
</comment>
<comment type="pathway">
    <text evidence="1">Porphyrin-containing compound metabolism; heme O biosynthesis; heme O from protoheme: step 1/1.</text>
</comment>
<comment type="subcellular location">
    <subcellularLocation>
        <location evidence="1">Cell membrane</location>
        <topology evidence="1">Multi-pass membrane protein</topology>
    </subcellularLocation>
</comment>
<comment type="miscellaneous">
    <text evidence="1">Carbon 2 of the heme B porphyrin ring is defined according to the Fischer nomenclature.</text>
</comment>
<comment type="similarity">
    <text evidence="1">Belongs to the UbiA prenyltransferase family. Protoheme IX farnesyltransferase subfamily.</text>
</comment>
<proteinExistence type="inferred from homology"/>
<name>COXX_SACI4</name>
<evidence type="ECO:0000255" key="1">
    <source>
        <dbReference type="HAMAP-Rule" id="MF_00154"/>
    </source>
</evidence>
<sequence length="285" mass="31250">MSLQQKIKAYLKLGKLGVVSLLDLAAVAGAFLAYKHGISLLPIIPMFIGGTLASMGAMIINSGIEIDRDKVMSRTSKRPTVVGYVNRKEAIIVGSLLAILGTALGFIDNILTAFFIALGVVIYIFVYTILLKPRTWLNIVIGGFAGSAAAWAGYTSLTNSLTLEGFLLGFLIFMWTPGHFWSLALKYREDYVNAHYPMLPAVVGITTSARAIAISNALMIPIVLLLGYYINLIALIAFSILSLFLMFLSYRLILNPTKEEAIKSFIFSNIYLMLILLIMIIVKLI</sequence>
<organism>
    <name type="scientific">Saccharolobus islandicus (strain M.14.25 / Kamchatka #1)</name>
    <name type="common">Sulfolobus islandicus</name>
    <dbReference type="NCBI Taxonomy" id="427317"/>
    <lineage>
        <taxon>Archaea</taxon>
        <taxon>Thermoproteota</taxon>
        <taxon>Thermoprotei</taxon>
        <taxon>Sulfolobales</taxon>
        <taxon>Sulfolobaceae</taxon>
        <taxon>Saccharolobus</taxon>
    </lineage>
</organism>
<reference key="1">
    <citation type="journal article" date="2009" name="Proc. Natl. Acad. Sci. U.S.A.">
        <title>Biogeography of the Sulfolobus islandicus pan-genome.</title>
        <authorList>
            <person name="Reno M.L."/>
            <person name="Held N.L."/>
            <person name="Fields C.J."/>
            <person name="Burke P.V."/>
            <person name="Whitaker R.J."/>
        </authorList>
    </citation>
    <scope>NUCLEOTIDE SEQUENCE [LARGE SCALE GENOMIC DNA]</scope>
    <source>
        <strain>M.14.25 / Kamchatka #1</strain>
    </source>
</reference>
<dbReference type="EC" id="2.5.1.141" evidence="1"/>
<dbReference type="EMBL" id="CP001400">
    <property type="protein sequence ID" value="ACP38231.1"/>
    <property type="molecule type" value="Genomic_DNA"/>
</dbReference>
<dbReference type="SMR" id="C3MW09"/>
<dbReference type="KEGG" id="sia:M1425_1480"/>
<dbReference type="HOGENOM" id="CLU_029631_0_1_2"/>
<dbReference type="UniPathway" id="UPA00834">
    <property type="reaction ID" value="UER00712"/>
</dbReference>
<dbReference type="Proteomes" id="UP000001350">
    <property type="component" value="Chromosome"/>
</dbReference>
<dbReference type="GO" id="GO:0005886">
    <property type="term" value="C:plasma membrane"/>
    <property type="evidence" value="ECO:0007669"/>
    <property type="project" value="UniProtKB-SubCell"/>
</dbReference>
<dbReference type="GO" id="GO:0008495">
    <property type="term" value="F:protoheme IX farnesyltransferase activity"/>
    <property type="evidence" value="ECO:0007669"/>
    <property type="project" value="UniProtKB-UniRule"/>
</dbReference>
<dbReference type="GO" id="GO:0048034">
    <property type="term" value="P:heme O biosynthetic process"/>
    <property type="evidence" value="ECO:0007669"/>
    <property type="project" value="UniProtKB-UniRule"/>
</dbReference>
<dbReference type="CDD" id="cd13957">
    <property type="entry name" value="PT_UbiA_Cox10"/>
    <property type="match status" value="1"/>
</dbReference>
<dbReference type="FunFam" id="1.10.357.140:FF:000018">
    <property type="entry name" value="Protoheme IX farnesyltransferase"/>
    <property type="match status" value="1"/>
</dbReference>
<dbReference type="Gene3D" id="1.10.357.140">
    <property type="entry name" value="UbiA prenyltransferase"/>
    <property type="match status" value="1"/>
</dbReference>
<dbReference type="HAMAP" id="MF_00154">
    <property type="entry name" value="CyoE_CtaB"/>
    <property type="match status" value="1"/>
</dbReference>
<dbReference type="InterPro" id="IPR006369">
    <property type="entry name" value="Protohaem_IX_farnesylTrfase"/>
</dbReference>
<dbReference type="InterPro" id="IPR000537">
    <property type="entry name" value="UbiA_prenyltransferase"/>
</dbReference>
<dbReference type="InterPro" id="IPR044878">
    <property type="entry name" value="UbiA_sf"/>
</dbReference>
<dbReference type="NCBIfam" id="TIGR01473">
    <property type="entry name" value="cyoE_ctaB"/>
    <property type="match status" value="1"/>
</dbReference>
<dbReference type="PANTHER" id="PTHR43448">
    <property type="entry name" value="PROTOHEME IX FARNESYLTRANSFERASE, MITOCHONDRIAL"/>
    <property type="match status" value="1"/>
</dbReference>
<dbReference type="PANTHER" id="PTHR43448:SF2">
    <property type="entry name" value="PROTOHEME IX FARNESYLTRANSFERASE, MITOCHONDRIAL"/>
    <property type="match status" value="1"/>
</dbReference>
<dbReference type="Pfam" id="PF01040">
    <property type="entry name" value="UbiA"/>
    <property type="match status" value="1"/>
</dbReference>
<feature type="chain" id="PRO_1000203462" description="Protoheme IX farnesyltransferase">
    <location>
        <begin position="1"/>
        <end position="285"/>
    </location>
</feature>
<feature type="transmembrane region" description="Helical" evidence="1">
    <location>
        <begin position="13"/>
        <end position="33"/>
    </location>
</feature>
<feature type="transmembrane region" description="Helical" evidence="1">
    <location>
        <begin position="40"/>
        <end position="60"/>
    </location>
</feature>
<feature type="transmembrane region" description="Helical" evidence="1">
    <location>
        <begin position="89"/>
        <end position="109"/>
    </location>
</feature>
<feature type="transmembrane region" description="Helical" evidence="1">
    <location>
        <begin position="110"/>
        <end position="130"/>
    </location>
</feature>
<feature type="transmembrane region" description="Helical" evidence="1">
    <location>
        <begin position="137"/>
        <end position="157"/>
    </location>
</feature>
<feature type="transmembrane region" description="Helical" evidence="1">
    <location>
        <begin position="165"/>
        <end position="185"/>
    </location>
</feature>
<feature type="transmembrane region" description="Helical" evidence="1">
    <location>
        <begin position="194"/>
        <end position="214"/>
    </location>
</feature>
<feature type="transmembrane region" description="Helical" evidence="1">
    <location>
        <begin position="230"/>
        <end position="252"/>
    </location>
</feature>
<feature type="transmembrane region" description="Helical" evidence="1">
    <location>
        <begin position="265"/>
        <end position="285"/>
    </location>
</feature>
<gene>
    <name evidence="1" type="primary">ctaB</name>
    <name type="ordered locus">M1425_1480</name>
</gene>
<protein>
    <recommendedName>
        <fullName evidence="1">Protoheme IX farnesyltransferase</fullName>
        <ecNumber evidence="1">2.5.1.141</ecNumber>
    </recommendedName>
    <alternativeName>
        <fullName evidence="1">Heme B farnesyltransferase</fullName>
    </alternativeName>
    <alternativeName>
        <fullName evidence="1">Heme O synthase</fullName>
    </alternativeName>
</protein>